<reference key="1">
    <citation type="journal article" date="2004" name="Nature">
        <title>Genome sequence of the Brown Norway rat yields insights into mammalian evolution.</title>
        <authorList>
            <person name="Gibbs R.A."/>
            <person name="Weinstock G.M."/>
            <person name="Metzker M.L."/>
            <person name="Muzny D.M."/>
            <person name="Sodergren E.J."/>
            <person name="Scherer S."/>
            <person name="Scott G."/>
            <person name="Steffen D."/>
            <person name="Worley K.C."/>
            <person name="Burch P.E."/>
            <person name="Okwuonu G."/>
            <person name="Hines S."/>
            <person name="Lewis L."/>
            <person name="Deramo C."/>
            <person name="Delgado O."/>
            <person name="Dugan-Rocha S."/>
            <person name="Miner G."/>
            <person name="Morgan M."/>
            <person name="Hawes A."/>
            <person name="Gill R."/>
            <person name="Holt R.A."/>
            <person name="Adams M.D."/>
            <person name="Amanatides P.G."/>
            <person name="Baden-Tillson H."/>
            <person name="Barnstead M."/>
            <person name="Chin S."/>
            <person name="Evans C.A."/>
            <person name="Ferriera S."/>
            <person name="Fosler C."/>
            <person name="Glodek A."/>
            <person name="Gu Z."/>
            <person name="Jennings D."/>
            <person name="Kraft C.L."/>
            <person name="Nguyen T."/>
            <person name="Pfannkoch C.M."/>
            <person name="Sitter C."/>
            <person name="Sutton G.G."/>
            <person name="Venter J.C."/>
            <person name="Woodage T."/>
            <person name="Smith D."/>
            <person name="Lee H.-M."/>
            <person name="Gustafson E."/>
            <person name="Cahill P."/>
            <person name="Kana A."/>
            <person name="Doucette-Stamm L."/>
            <person name="Weinstock K."/>
            <person name="Fechtel K."/>
            <person name="Weiss R.B."/>
            <person name="Dunn D.M."/>
            <person name="Green E.D."/>
            <person name="Blakesley R.W."/>
            <person name="Bouffard G.G."/>
            <person name="De Jong P.J."/>
            <person name="Osoegawa K."/>
            <person name="Zhu B."/>
            <person name="Marra M."/>
            <person name="Schein J."/>
            <person name="Bosdet I."/>
            <person name="Fjell C."/>
            <person name="Jones S."/>
            <person name="Krzywinski M."/>
            <person name="Mathewson C."/>
            <person name="Siddiqui A."/>
            <person name="Wye N."/>
            <person name="McPherson J."/>
            <person name="Zhao S."/>
            <person name="Fraser C.M."/>
            <person name="Shetty J."/>
            <person name="Shatsman S."/>
            <person name="Geer K."/>
            <person name="Chen Y."/>
            <person name="Abramzon S."/>
            <person name="Nierman W.C."/>
            <person name="Havlak P.H."/>
            <person name="Chen R."/>
            <person name="Durbin K.J."/>
            <person name="Egan A."/>
            <person name="Ren Y."/>
            <person name="Song X.-Z."/>
            <person name="Li B."/>
            <person name="Liu Y."/>
            <person name="Qin X."/>
            <person name="Cawley S."/>
            <person name="Cooney A.J."/>
            <person name="D'Souza L.M."/>
            <person name="Martin K."/>
            <person name="Wu J.Q."/>
            <person name="Gonzalez-Garay M.L."/>
            <person name="Jackson A.R."/>
            <person name="Kalafus K.J."/>
            <person name="McLeod M.P."/>
            <person name="Milosavljevic A."/>
            <person name="Virk D."/>
            <person name="Volkov A."/>
            <person name="Wheeler D.A."/>
            <person name="Zhang Z."/>
            <person name="Bailey J.A."/>
            <person name="Eichler E.E."/>
            <person name="Tuzun E."/>
            <person name="Birney E."/>
            <person name="Mongin E."/>
            <person name="Ureta-Vidal A."/>
            <person name="Woodwark C."/>
            <person name="Zdobnov E."/>
            <person name="Bork P."/>
            <person name="Suyama M."/>
            <person name="Torrents D."/>
            <person name="Alexandersson M."/>
            <person name="Trask B.J."/>
            <person name="Young J.M."/>
            <person name="Huang H."/>
            <person name="Wang H."/>
            <person name="Xing H."/>
            <person name="Daniels S."/>
            <person name="Gietzen D."/>
            <person name="Schmidt J."/>
            <person name="Stevens K."/>
            <person name="Vitt U."/>
            <person name="Wingrove J."/>
            <person name="Camara F."/>
            <person name="Mar Alba M."/>
            <person name="Abril J.F."/>
            <person name="Guigo R."/>
            <person name="Smit A."/>
            <person name="Dubchak I."/>
            <person name="Rubin E.M."/>
            <person name="Couronne O."/>
            <person name="Poliakov A."/>
            <person name="Huebner N."/>
            <person name="Ganten D."/>
            <person name="Goesele C."/>
            <person name="Hummel O."/>
            <person name="Kreitler T."/>
            <person name="Lee Y.-A."/>
            <person name="Monti J."/>
            <person name="Schulz H."/>
            <person name="Zimdahl H."/>
            <person name="Himmelbauer H."/>
            <person name="Lehrach H."/>
            <person name="Jacob H.J."/>
            <person name="Bromberg S."/>
            <person name="Gullings-Handley J."/>
            <person name="Jensen-Seaman M.I."/>
            <person name="Kwitek A.E."/>
            <person name="Lazar J."/>
            <person name="Pasko D."/>
            <person name="Tonellato P.J."/>
            <person name="Twigger S."/>
            <person name="Ponting C.P."/>
            <person name="Duarte J.M."/>
            <person name="Rice S."/>
            <person name="Goodstadt L."/>
            <person name="Beatson S.A."/>
            <person name="Emes R.D."/>
            <person name="Winter E.E."/>
            <person name="Webber C."/>
            <person name="Brandt P."/>
            <person name="Nyakatura G."/>
            <person name="Adetobi M."/>
            <person name="Chiaromonte F."/>
            <person name="Elnitski L."/>
            <person name="Eswara P."/>
            <person name="Hardison R.C."/>
            <person name="Hou M."/>
            <person name="Kolbe D."/>
            <person name="Makova K."/>
            <person name="Miller W."/>
            <person name="Nekrutenko A."/>
            <person name="Riemer C."/>
            <person name="Schwartz S."/>
            <person name="Taylor J."/>
            <person name="Yang S."/>
            <person name="Zhang Y."/>
            <person name="Lindpaintner K."/>
            <person name="Andrews T.D."/>
            <person name="Caccamo M."/>
            <person name="Clamp M."/>
            <person name="Clarke L."/>
            <person name="Curwen V."/>
            <person name="Durbin R.M."/>
            <person name="Eyras E."/>
            <person name="Searle S.M."/>
            <person name="Cooper G.M."/>
            <person name="Batzoglou S."/>
            <person name="Brudno M."/>
            <person name="Sidow A."/>
            <person name="Stone E.A."/>
            <person name="Payseur B.A."/>
            <person name="Bourque G."/>
            <person name="Lopez-Otin C."/>
            <person name="Puente X.S."/>
            <person name="Chakrabarti K."/>
            <person name="Chatterji S."/>
            <person name="Dewey C."/>
            <person name="Pachter L."/>
            <person name="Bray N."/>
            <person name="Yap V.B."/>
            <person name="Caspi A."/>
            <person name="Tesler G."/>
            <person name="Pevzner P.A."/>
            <person name="Haussler D."/>
            <person name="Roskin K.M."/>
            <person name="Baertsch R."/>
            <person name="Clawson H."/>
            <person name="Furey T.S."/>
            <person name="Hinrichs A.S."/>
            <person name="Karolchik D."/>
            <person name="Kent W.J."/>
            <person name="Rosenbloom K.R."/>
            <person name="Trumbower H."/>
            <person name="Weirauch M."/>
            <person name="Cooper D.N."/>
            <person name="Stenson P.D."/>
            <person name="Ma B."/>
            <person name="Brent M."/>
            <person name="Arumugam M."/>
            <person name="Shteynberg D."/>
            <person name="Copley R.R."/>
            <person name="Taylor M.S."/>
            <person name="Riethman H."/>
            <person name="Mudunuri U."/>
            <person name="Peterson J."/>
            <person name="Guyer M."/>
            <person name="Felsenfeld A."/>
            <person name="Old S."/>
            <person name="Mockrin S."/>
            <person name="Collins F.S."/>
        </authorList>
    </citation>
    <scope>NUCLEOTIDE SEQUENCE [LARGE SCALE GENOMIC DNA]</scope>
    <source>
        <strain>Brown Norway</strain>
    </source>
</reference>
<reference key="2">
    <citation type="submission" date="2005-07" db="EMBL/GenBank/DDBJ databases">
        <authorList>
            <person name="Mural R.J."/>
            <person name="Adams M.D."/>
            <person name="Myers E.W."/>
            <person name="Smith H.O."/>
            <person name="Venter J.C."/>
        </authorList>
    </citation>
    <scope>NUCLEOTIDE SEQUENCE [LARGE SCALE GENOMIC DNA]</scope>
</reference>
<reference key="3">
    <citation type="journal article" date="2004" name="Genome Res.">
        <title>The status, quality, and expansion of the NIH full-length cDNA project: the Mammalian Gene Collection (MGC).</title>
        <authorList>
            <consortium name="The MGC Project Team"/>
        </authorList>
    </citation>
    <scope>NUCLEOTIDE SEQUENCE [LARGE SCALE MRNA]</scope>
    <source>
        <tissue>Thymus</tissue>
    </source>
</reference>
<name>GSTM4_RAT</name>
<evidence type="ECO:0000250" key="1"/>
<evidence type="ECO:0000250" key="2">
    <source>
        <dbReference type="UniProtKB" id="P08515"/>
    </source>
</evidence>
<evidence type="ECO:0000250" key="3">
    <source>
        <dbReference type="UniProtKB" id="Q03013"/>
    </source>
</evidence>
<evidence type="ECO:0000255" key="4">
    <source>
        <dbReference type="PROSITE-ProRule" id="PRU00684"/>
    </source>
</evidence>
<evidence type="ECO:0000255" key="5">
    <source>
        <dbReference type="PROSITE-ProRule" id="PRU00685"/>
    </source>
</evidence>
<evidence type="ECO:0000305" key="6"/>
<protein>
    <recommendedName>
        <fullName>Glutathione S-transferase Mu 4</fullName>
        <ecNumber evidence="3">2.5.1.18</ecNumber>
    </recommendedName>
    <alternativeName>
        <fullName>GST class-mu 4</fullName>
    </alternativeName>
    <alternativeName>
        <fullName>GSTM4-4</fullName>
    </alternativeName>
    <alternativeName>
        <fullName>Leukotriene C4 synthase GSTM4</fullName>
        <ecNumber evidence="3">4.4.1.20</ecNumber>
    </alternativeName>
</protein>
<gene>
    <name type="primary">Gstm4</name>
</gene>
<comment type="function">
    <text evidence="3">Conjugation of reduced glutathione to a wide number of exogenous and endogenous hydrophobic electrophiles. Catalyzes the conjugation of leukotriene A4 with reduced glutathione (GSH) to form leukotriene C4. Can also catalyze the transfer of a glutathionyl group from glutathione (GSH) to 13(S),14(S)-epoxy-docosahexaenoic acid to form maresin conjugate in tissue regeneration 1 (MCTR1), a bioactive lipid mediator that possess potent anti-inflammatory and proresolving actions.</text>
</comment>
<comment type="catalytic activity">
    <reaction evidence="3">
        <text>RX + glutathione = an S-substituted glutathione + a halide anion + H(+)</text>
        <dbReference type="Rhea" id="RHEA:16437"/>
        <dbReference type="ChEBI" id="CHEBI:15378"/>
        <dbReference type="ChEBI" id="CHEBI:16042"/>
        <dbReference type="ChEBI" id="CHEBI:17792"/>
        <dbReference type="ChEBI" id="CHEBI:57925"/>
        <dbReference type="ChEBI" id="CHEBI:90779"/>
        <dbReference type="EC" id="2.5.1.18"/>
    </reaction>
</comment>
<comment type="catalytic activity">
    <reaction evidence="3">
        <text>1-chloro-2,4-dinitrobenzene + glutathione = 2,4-dinitrophenyl-S-glutathione + chloride + H(+)</text>
        <dbReference type="Rhea" id="RHEA:51220"/>
        <dbReference type="ChEBI" id="CHEBI:15378"/>
        <dbReference type="ChEBI" id="CHEBI:17996"/>
        <dbReference type="ChEBI" id="CHEBI:34718"/>
        <dbReference type="ChEBI" id="CHEBI:57925"/>
        <dbReference type="ChEBI" id="CHEBI:133977"/>
        <dbReference type="EC" id="2.5.1.18"/>
    </reaction>
</comment>
<comment type="catalytic activity">
    <reaction evidence="3">
        <text>(13S,14S)-epoxy-(4Z,7Z,9E,11E,16Z,19Z)-docosahexaenoate + glutathione = (13R)-S-glutathionyl-(14S)-hydroxy-(4Z,7Z,9E,11E,16Z,19Z)-docosahexaenoate</text>
        <dbReference type="Rhea" id="RHEA:53508"/>
        <dbReference type="ChEBI" id="CHEBI:57925"/>
        <dbReference type="ChEBI" id="CHEBI:131958"/>
        <dbReference type="ChEBI" id="CHEBI:137407"/>
    </reaction>
</comment>
<comment type="catalytic activity">
    <reaction evidence="3">
        <text>leukotriene C4 = leukotriene A4 + glutathione</text>
        <dbReference type="Rhea" id="RHEA:17617"/>
        <dbReference type="ChEBI" id="CHEBI:57463"/>
        <dbReference type="ChEBI" id="CHEBI:57925"/>
        <dbReference type="ChEBI" id="CHEBI:57973"/>
        <dbReference type="EC" id="4.4.1.20"/>
    </reaction>
</comment>
<comment type="subunit">
    <text evidence="3">Homodimer.</text>
</comment>
<comment type="subcellular location">
    <subcellularLocation>
        <location evidence="3">Cytoplasm</location>
    </subcellularLocation>
</comment>
<comment type="similarity">
    <text evidence="6">Belongs to the GST superfamily. Mu family.</text>
</comment>
<keyword id="KW-0963">Cytoplasm</keyword>
<keyword id="KW-0443">Lipid metabolism</keyword>
<keyword id="KW-0456">Lyase</keyword>
<keyword id="KW-1185">Reference proteome</keyword>
<keyword id="KW-0808">Transferase</keyword>
<organism>
    <name type="scientific">Rattus norvegicus</name>
    <name type="common">Rat</name>
    <dbReference type="NCBI Taxonomy" id="10116"/>
    <lineage>
        <taxon>Eukaryota</taxon>
        <taxon>Metazoa</taxon>
        <taxon>Chordata</taxon>
        <taxon>Craniata</taxon>
        <taxon>Vertebrata</taxon>
        <taxon>Euteleostomi</taxon>
        <taxon>Mammalia</taxon>
        <taxon>Eutheria</taxon>
        <taxon>Euarchontoglires</taxon>
        <taxon>Glires</taxon>
        <taxon>Rodentia</taxon>
        <taxon>Myomorpha</taxon>
        <taxon>Muroidea</taxon>
        <taxon>Muridae</taxon>
        <taxon>Murinae</taxon>
        <taxon>Rattus</taxon>
    </lineage>
</organism>
<sequence length="218" mass="25553">MPMTLGYWDIRGLAHAIRLLLEYTDSSYEEKRYTMGDAPDYDRSQWLSEKFKLGLDFPNLPYLIDGSHKITQSNAILRYIARKHNLCGETEEEKIRVDILENQAMDVSNQLARVCYSPDFENLKAEYLEQLPGMMELFSQFLGKQTWFVGEKITFVDFLAYDILDLHLIFEPKCLDAFPNLKDFVARFEGLKKISVYMKTSRFLRTPLYTRVATWGNK</sequence>
<proteinExistence type="evidence at transcript level"/>
<feature type="chain" id="PRO_0000449828" description="Glutathione S-transferase Mu 4">
    <location>
        <begin position="1"/>
        <end position="218"/>
    </location>
</feature>
<feature type="domain" description="GST N-terminal" evidence="4">
    <location>
        <begin position="1"/>
        <end position="88"/>
    </location>
</feature>
<feature type="domain" description="GST C-terminal" evidence="5">
    <location>
        <begin position="90"/>
        <end position="208"/>
    </location>
</feature>
<feature type="binding site" evidence="2">
    <location>
        <begin position="7"/>
        <end position="8"/>
    </location>
    <ligand>
        <name>glutathione</name>
        <dbReference type="ChEBI" id="CHEBI:57925"/>
    </ligand>
</feature>
<feature type="binding site" evidence="2">
    <location>
        <begin position="46"/>
        <end position="50"/>
    </location>
    <ligand>
        <name>glutathione</name>
        <dbReference type="ChEBI" id="CHEBI:57925"/>
    </ligand>
</feature>
<feature type="binding site" evidence="2">
    <location>
        <begin position="59"/>
        <end position="60"/>
    </location>
    <ligand>
        <name>glutathione</name>
        <dbReference type="ChEBI" id="CHEBI:57925"/>
    </ligand>
</feature>
<feature type="binding site" evidence="2">
    <location>
        <begin position="72"/>
        <end position="73"/>
    </location>
    <ligand>
        <name>glutathione</name>
        <dbReference type="ChEBI" id="CHEBI:57925"/>
    </ligand>
</feature>
<feature type="binding site" evidence="1">
    <location>
        <position position="116"/>
    </location>
    <ligand>
        <name>substrate</name>
    </ligand>
</feature>
<accession>Q5BK56</accession>
<dbReference type="EC" id="2.5.1.18" evidence="3"/>
<dbReference type="EC" id="4.4.1.20" evidence="3"/>
<dbReference type="EMBL" id="AC097845">
    <property type="status" value="NOT_ANNOTATED_CDS"/>
    <property type="molecule type" value="Genomic_DNA"/>
</dbReference>
<dbReference type="EMBL" id="CH473952">
    <property type="protein sequence ID" value="EDL81910.1"/>
    <property type="molecule type" value="Genomic_DNA"/>
</dbReference>
<dbReference type="EMBL" id="BC091199">
    <property type="protein sequence ID" value="AAH91199.1"/>
    <property type="molecule type" value="mRNA"/>
</dbReference>
<dbReference type="RefSeq" id="NP_001019475.1">
    <property type="nucleotide sequence ID" value="NM_001024304.1"/>
</dbReference>
<dbReference type="SMR" id="Q5BK56"/>
<dbReference type="FunCoup" id="Q5BK56">
    <property type="interactions" value="183"/>
</dbReference>
<dbReference type="STRING" id="10116.ENSRNOP00000025994"/>
<dbReference type="iPTMnet" id="Q5BK56"/>
<dbReference type="PhosphoSitePlus" id="Q5BK56"/>
<dbReference type="jPOST" id="Q5BK56"/>
<dbReference type="PaxDb" id="10116-ENSRNOP00000025994"/>
<dbReference type="Ensembl" id="ENSRNOT00000025994.7">
    <property type="protein sequence ID" value="ENSRNOP00000025994.4"/>
    <property type="gene ID" value="ENSRNOG00000019221.7"/>
</dbReference>
<dbReference type="GeneID" id="499689"/>
<dbReference type="KEGG" id="rno:499689"/>
<dbReference type="UCSC" id="RGD:1565825">
    <property type="organism name" value="rat"/>
</dbReference>
<dbReference type="AGR" id="RGD:1565825"/>
<dbReference type="CTD" id="2948"/>
<dbReference type="RGD" id="1565825">
    <property type="gene designation" value="Gstm4"/>
</dbReference>
<dbReference type="eggNOG" id="KOG1695">
    <property type="taxonomic scope" value="Eukaryota"/>
</dbReference>
<dbReference type="GeneTree" id="ENSGT00940000154679"/>
<dbReference type="HOGENOM" id="CLU_039475_2_0_1"/>
<dbReference type="InParanoid" id="Q5BK56"/>
<dbReference type="OrthoDB" id="5695at9989"/>
<dbReference type="PhylomeDB" id="Q5BK56"/>
<dbReference type="TreeFam" id="TF353040"/>
<dbReference type="Reactome" id="R-RNO-156590">
    <property type="pathway name" value="Glutathione conjugation"/>
</dbReference>
<dbReference type="Reactome" id="R-RNO-9026762">
    <property type="pathway name" value="Biosynthesis of maresin conjugates in tissue regeneration (MCTR)"/>
</dbReference>
<dbReference type="PRO" id="PR:Q5BK56"/>
<dbReference type="Proteomes" id="UP000002494">
    <property type="component" value="Chromosome 2"/>
</dbReference>
<dbReference type="Proteomes" id="UP000234681">
    <property type="component" value="Chromosome 2"/>
</dbReference>
<dbReference type="Bgee" id="ENSRNOG00000019221">
    <property type="expression patterns" value="Expressed in duodenum and 19 other cell types or tissues"/>
</dbReference>
<dbReference type="GO" id="GO:0005737">
    <property type="term" value="C:cytoplasm"/>
    <property type="evidence" value="ECO:0000266"/>
    <property type="project" value="RGD"/>
</dbReference>
<dbReference type="GO" id="GO:0005829">
    <property type="term" value="C:cytosol"/>
    <property type="evidence" value="ECO:0007669"/>
    <property type="project" value="Ensembl"/>
</dbReference>
<dbReference type="GO" id="GO:0019899">
    <property type="term" value="F:enzyme binding"/>
    <property type="evidence" value="ECO:0000266"/>
    <property type="project" value="RGD"/>
</dbReference>
<dbReference type="GO" id="GO:0043295">
    <property type="term" value="F:glutathione binding"/>
    <property type="evidence" value="ECO:0000266"/>
    <property type="project" value="RGD"/>
</dbReference>
<dbReference type="GO" id="GO:0004364">
    <property type="term" value="F:glutathione transferase activity"/>
    <property type="evidence" value="ECO:0000250"/>
    <property type="project" value="UniProtKB"/>
</dbReference>
<dbReference type="GO" id="GO:0004464">
    <property type="term" value="F:leukotriene-C4 synthase activity"/>
    <property type="evidence" value="ECO:0000250"/>
    <property type="project" value="UniProtKB"/>
</dbReference>
<dbReference type="GO" id="GO:0042803">
    <property type="term" value="F:protein homodimerization activity"/>
    <property type="evidence" value="ECO:0000266"/>
    <property type="project" value="RGD"/>
</dbReference>
<dbReference type="GO" id="GO:0006749">
    <property type="term" value="P:glutathione metabolic process"/>
    <property type="evidence" value="ECO:0000266"/>
    <property type="project" value="RGD"/>
</dbReference>
<dbReference type="GO" id="GO:0042759">
    <property type="term" value="P:long-chain fatty acid biosynthetic process"/>
    <property type="evidence" value="ECO:0000250"/>
    <property type="project" value="UniProtKB"/>
</dbReference>
<dbReference type="GO" id="GO:0018916">
    <property type="term" value="P:nitrobenzene metabolic process"/>
    <property type="evidence" value="ECO:0000266"/>
    <property type="project" value="RGD"/>
</dbReference>
<dbReference type="GO" id="GO:0042178">
    <property type="term" value="P:xenobiotic catabolic process"/>
    <property type="evidence" value="ECO:0000266"/>
    <property type="project" value="RGD"/>
</dbReference>
<dbReference type="CDD" id="cd03209">
    <property type="entry name" value="GST_C_Mu"/>
    <property type="match status" value="1"/>
</dbReference>
<dbReference type="CDD" id="cd03075">
    <property type="entry name" value="GST_N_Mu"/>
    <property type="match status" value="1"/>
</dbReference>
<dbReference type="FunFam" id="3.40.30.10:FF:000603">
    <property type="entry name" value="Glutathione S-transferase Mu 1"/>
    <property type="match status" value="1"/>
</dbReference>
<dbReference type="FunFam" id="1.20.1050.10:FF:000101">
    <property type="entry name" value="Glutathione S-transferase Mu 4"/>
    <property type="match status" value="1"/>
</dbReference>
<dbReference type="Gene3D" id="1.20.1050.10">
    <property type="match status" value="1"/>
</dbReference>
<dbReference type="Gene3D" id="3.40.30.10">
    <property type="entry name" value="Glutaredoxin"/>
    <property type="match status" value="1"/>
</dbReference>
<dbReference type="InterPro" id="IPR010987">
    <property type="entry name" value="Glutathione-S-Trfase_C-like"/>
</dbReference>
<dbReference type="InterPro" id="IPR036282">
    <property type="entry name" value="Glutathione-S-Trfase_C_sf"/>
</dbReference>
<dbReference type="InterPro" id="IPR004045">
    <property type="entry name" value="Glutathione_S-Trfase_N"/>
</dbReference>
<dbReference type="InterPro" id="IPR004046">
    <property type="entry name" value="GST_C"/>
</dbReference>
<dbReference type="InterPro" id="IPR003081">
    <property type="entry name" value="GST_mu"/>
</dbReference>
<dbReference type="InterPro" id="IPR050213">
    <property type="entry name" value="GST_superfamily"/>
</dbReference>
<dbReference type="InterPro" id="IPR036249">
    <property type="entry name" value="Thioredoxin-like_sf"/>
</dbReference>
<dbReference type="PANTHER" id="PTHR11571">
    <property type="entry name" value="GLUTATHIONE S-TRANSFERASE"/>
    <property type="match status" value="1"/>
</dbReference>
<dbReference type="PANTHER" id="PTHR11571:SF137">
    <property type="entry name" value="GLUTATHIONE S-TRANSFERASE MU 4"/>
    <property type="match status" value="1"/>
</dbReference>
<dbReference type="Pfam" id="PF00043">
    <property type="entry name" value="GST_C"/>
    <property type="match status" value="1"/>
</dbReference>
<dbReference type="Pfam" id="PF02798">
    <property type="entry name" value="GST_N"/>
    <property type="match status" value="1"/>
</dbReference>
<dbReference type="PRINTS" id="PR01267">
    <property type="entry name" value="GSTRNSFRASEM"/>
</dbReference>
<dbReference type="SFLD" id="SFLDG01205">
    <property type="entry name" value="AMPS.1"/>
    <property type="match status" value="1"/>
</dbReference>
<dbReference type="SFLD" id="SFLDG00363">
    <property type="entry name" value="AMPS_(cytGST):_Alpha-__Mu-__Pi"/>
    <property type="match status" value="1"/>
</dbReference>
<dbReference type="SUPFAM" id="SSF47616">
    <property type="entry name" value="GST C-terminal domain-like"/>
    <property type="match status" value="1"/>
</dbReference>
<dbReference type="SUPFAM" id="SSF52833">
    <property type="entry name" value="Thioredoxin-like"/>
    <property type="match status" value="1"/>
</dbReference>
<dbReference type="PROSITE" id="PS50405">
    <property type="entry name" value="GST_CTER"/>
    <property type="match status" value="1"/>
</dbReference>
<dbReference type="PROSITE" id="PS50404">
    <property type="entry name" value="GST_NTER"/>
    <property type="match status" value="1"/>
</dbReference>